<reference key="1">
    <citation type="journal article" date="2009" name="J. Bacteriol.">
        <title>Complete genome sequence of the extremophilic Bacillus cereus strain Q1 with industrial applications.</title>
        <authorList>
            <person name="Xiong Z."/>
            <person name="Jiang Y."/>
            <person name="Qi D."/>
            <person name="Lu H."/>
            <person name="Yang F."/>
            <person name="Yang J."/>
            <person name="Chen L."/>
            <person name="Sun L."/>
            <person name="Xu X."/>
            <person name="Xue Y."/>
            <person name="Zhu Y."/>
            <person name="Jin Q."/>
        </authorList>
    </citation>
    <scope>NUCLEOTIDE SEQUENCE [LARGE SCALE GENOMIC DNA]</scope>
    <source>
        <strain>Q1</strain>
    </source>
</reference>
<keyword id="KW-0227">DNA damage</keyword>
<keyword id="KW-0233">DNA recombination</keyword>
<keyword id="KW-0234">DNA repair</keyword>
<keyword id="KW-0479">Metal-binding</keyword>
<keyword id="KW-0862">Zinc</keyword>
<keyword id="KW-0863">Zinc-finger</keyword>
<feature type="chain" id="PRO_1000116674" description="Recombination protein RecR">
    <location>
        <begin position="1"/>
        <end position="198"/>
    </location>
</feature>
<feature type="domain" description="Toprim" evidence="1">
    <location>
        <begin position="80"/>
        <end position="175"/>
    </location>
</feature>
<feature type="zinc finger region" description="C4-type" evidence="1">
    <location>
        <begin position="57"/>
        <end position="72"/>
    </location>
</feature>
<name>RECR_BACCQ</name>
<dbReference type="EMBL" id="CP000227">
    <property type="protein sequence ID" value="ACM10551.1"/>
    <property type="molecule type" value="Genomic_DNA"/>
</dbReference>
<dbReference type="SMR" id="B9IYI9"/>
<dbReference type="KEGG" id="bcq:BCQ_0028"/>
<dbReference type="HOGENOM" id="CLU_060739_1_0_9"/>
<dbReference type="Proteomes" id="UP000000441">
    <property type="component" value="Chromosome"/>
</dbReference>
<dbReference type="GO" id="GO:0003677">
    <property type="term" value="F:DNA binding"/>
    <property type="evidence" value="ECO:0007669"/>
    <property type="project" value="UniProtKB-UniRule"/>
</dbReference>
<dbReference type="GO" id="GO:0008270">
    <property type="term" value="F:zinc ion binding"/>
    <property type="evidence" value="ECO:0007669"/>
    <property type="project" value="UniProtKB-KW"/>
</dbReference>
<dbReference type="GO" id="GO:0006310">
    <property type="term" value="P:DNA recombination"/>
    <property type="evidence" value="ECO:0007669"/>
    <property type="project" value="UniProtKB-UniRule"/>
</dbReference>
<dbReference type="GO" id="GO:0006281">
    <property type="term" value="P:DNA repair"/>
    <property type="evidence" value="ECO:0007669"/>
    <property type="project" value="UniProtKB-UniRule"/>
</dbReference>
<dbReference type="CDD" id="cd01025">
    <property type="entry name" value="TOPRIM_recR"/>
    <property type="match status" value="1"/>
</dbReference>
<dbReference type="Gene3D" id="3.30.60.80">
    <property type="match status" value="1"/>
</dbReference>
<dbReference type="Gene3D" id="3.40.1360.10">
    <property type="match status" value="1"/>
</dbReference>
<dbReference type="Gene3D" id="6.10.250.240">
    <property type="match status" value="1"/>
</dbReference>
<dbReference type="Gene3D" id="1.10.8.420">
    <property type="entry name" value="RecR Domain 1"/>
    <property type="match status" value="1"/>
</dbReference>
<dbReference type="HAMAP" id="MF_00017">
    <property type="entry name" value="RecR"/>
    <property type="match status" value="1"/>
</dbReference>
<dbReference type="InterPro" id="IPR000093">
    <property type="entry name" value="DNA_Rcmb_RecR"/>
</dbReference>
<dbReference type="InterPro" id="IPR023627">
    <property type="entry name" value="Rcmb_RecR"/>
</dbReference>
<dbReference type="InterPro" id="IPR015967">
    <property type="entry name" value="Rcmb_RecR_Znf"/>
</dbReference>
<dbReference type="InterPro" id="IPR006171">
    <property type="entry name" value="TOPRIM_dom"/>
</dbReference>
<dbReference type="InterPro" id="IPR034137">
    <property type="entry name" value="TOPRIM_RecR"/>
</dbReference>
<dbReference type="NCBIfam" id="TIGR00615">
    <property type="entry name" value="recR"/>
    <property type="match status" value="1"/>
</dbReference>
<dbReference type="PANTHER" id="PTHR30446">
    <property type="entry name" value="RECOMBINATION PROTEIN RECR"/>
    <property type="match status" value="1"/>
</dbReference>
<dbReference type="PANTHER" id="PTHR30446:SF0">
    <property type="entry name" value="RECOMBINATION PROTEIN RECR"/>
    <property type="match status" value="1"/>
</dbReference>
<dbReference type="Pfam" id="PF21175">
    <property type="entry name" value="RecR_C"/>
    <property type="match status" value="1"/>
</dbReference>
<dbReference type="Pfam" id="PF21176">
    <property type="entry name" value="RecR_HhH"/>
    <property type="match status" value="1"/>
</dbReference>
<dbReference type="Pfam" id="PF02132">
    <property type="entry name" value="RecR_ZnF"/>
    <property type="match status" value="1"/>
</dbReference>
<dbReference type="Pfam" id="PF13662">
    <property type="entry name" value="Toprim_4"/>
    <property type="match status" value="1"/>
</dbReference>
<dbReference type="SMART" id="SM00493">
    <property type="entry name" value="TOPRIM"/>
    <property type="match status" value="1"/>
</dbReference>
<dbReference type="SUPFAM" id="SSF111304">
    <property type="entry name" value="Recombination protein RecR"/>
    <property type="match status" value="1"/>
</dbReference>
<dbReference type="PROSITE" id="PS01300">
    <property type="entry name" value="RECR"/>
    <property type="match status" value="1"/>
</dbReference>
<dbReference type="PROSITE" id="PS50880">
    <property type="entry name" value="TOPRIM"/>
    <property type="match status" value="1"/>
</dbReference>
<protein>
    <recommendedName>
        <fullName evidence="1">Recombination protein RecR</fullName>
    </recommendedName>
</protein>
<evidence type="ECO:0000255" key="1">
    <source>
        <dbReference type="HAMAP-Rule" id="MF_00017"/>
    </source>
</evidence>
<accession>B9IYI9</accession>
<proteinExistence type="inferred from homology"/>
<gene>
    <name evidence="1" type="primary">recR</name>
    <name type="ordered locus">BCQ_0028</name>
</gene>
<comment type="function">
    <text evidence="1">May play a role in DNA repair. It seems to be involved in an RecBC-independent recombinational process of DNA repair. It may act with RecF and RecO.</text>
</comment>
<comment type="similarity">
    <text evidence="1">Belongs to the RecR family.</text>
</comment>
<organism>
    <name type="scientific">Bacillus cereus (strain Q1)</name>
    <dbReference type="NCBI Taxonomy" id="361100"/>
    <lineage>
        <taxon>Bacteria</taxon>
        <taxon>Bacillati</taxon>
        <taxon>Bacillota</taxon>
        <taxon>Bacilli</taxon>
        <taxon>Bacillales</taxon>
        <taxon>Bacillaceae</taxon>
        <taxon>Bacillus</taxon>
        <taxon>Bacillus cereus group</taxon>
    </lineage>
</organism>
<sequence length="198" mass="21976">MHYPEPISKLIDSFMKLPGIGPKTAVRLAFFVLDMKEDDVLGFAKALVNAKRDLAYCSVCGHITDRDPCYICNDSHRDQSVVCVVQEPKDVIAMEKMKEYQGVYHVLRGAISPMEGIGPEDINIPQLLKRLHDETVQEVILATNPNIEGEATAMYISRLLKPTGIKVTRIAHGLPVGGDLEYADEVTLSKALEGRREV</sequence>